<dbReference type="EC" id="1.13.11.79"/>
<dbReference type="EMBL" id="AF010496">
    <property type="protein sequence ID" value="AAC16179.1"/>
    <property type="molecule type" value="Genomic_DNA"/>
</dbReference>
<dbReference type="EMBL" id="CP001312">
    <property type="protein sequence ID" value="ADE85796.1"/>
    <property type="molecule type" value="Genomic_DNA"/>
</dbReference>
<dbReference type="PIR" id="T03526">
    <property type="entry name" value="T03526"/>
</dbReference>
<dbReference type="RefSeq" id="WP_013067775.1">
    <property type="nucleotide sequence ID" value="NC_014034.1"/>
</dbReference>
<dbReference type="SMR" id="D5AV14"/>
<dbReference type="STRING" id="272942.RCAP_rcc02052"/>
<dbReference type="GeneID" id="31490914"/>
<dbReference type="KEGG" id="rcp:RCAP_rcc02052"/>
<dbReference type="eggNOG" id="COG0778">
    <property type="taxonomic scope" value="Bacteria"/>
</dbReference>
<dbReference type="HOGENOM" id="CLU_070764_3_0_5"/>
<dbReference type="OrthoDB" id="9773807at2"/>
<dbReference type="Proteomes" id="UP000002361">
    <property type="component" value="Chromosome"/>
</dbReference>
<dbReference type="GO" id="GO:0102919">
    <property type="term" value="F:5,6-dimethylbenzimidazole synthase activity"/>
    <property type="evidence" value="ECO:0007669"/>
    <property type="project" value="UniProtKB-EC"/>
</dbReference>
<dbReference type="GO" id="GO:0000166">
    <property type="term" value="F:nucleotide binding"/>
    <property type="evidence" value="ECO:0007669"/>
    <property type="project" value="UniProtKB-KW"/>
</dbReference>
<dbReference type="GO" id="GO:0016705">
    <property type="term" value="F:oxidoreductase activity, acting on paired donors, with incorporation or reduction of molecular oxygen"/>
    <property type="evidence" value="ECO:0000250"/>
    <property type="project" value="UniProtKB"/>
</dbReference>
<dbReference type="GO" id="GO:0009236">
    <property type="term" value="P:cobalamin biosynthetic process"/>
    <property type="evidence" value="ECO:0000250"/>
    <property type="project" value="UniProtKB"/>
</dbReference>
<dbReference type="CDD" id="cd02145">
    <property type="entry name" value="BluB"/>
    <property type="match status" value="1"/>
</dbReference>
<dbReference type="FunFam" id="3.40.109.10:FF:000013">
    <property type="entry name" value="5,6-dimethylbenzimidazole synthase"/>
    <property type="match status" value="1"/>
</dbReference>
<dbReference type="Gene3D" id="3.40.109.10">
    <property type="entry name" value="NADH Oxidase"/>
    <property type="match status" value="1"/>
</dbReference>
<dbReference type="InterPro" id="IPR012825">
    <property type="entry name" value="BluB"/>
</dbReference>
<dbReference type="InterPro" id="IPR029479">
    <property type="entry name" value="Nitroreductase"/>
</dbReference>
<dbReference type="InterPro" id="IPR000415">
    <property type="entry name" value="Nitroreductase-like"/>
</dbReference>
<dbReference type="InterPro" id="IPR050627">
    <property type="entry name" value="Nitroreductase/BluB"/>
</dbReference>
<dbReference type="NCBIfam" id="TIGR02476">
    <property type="entry name" value="BluB"/>
    <property type="match status" value="1"/>
</dbReference>
<dbReference type="PANTHER" id="PTHR23026:SF123">
    <property type="entry name" value="NAD(P)H NITROREDUCTASE RV3131-RELATED"/>
    <property type="match status" value="1"/>
</dbReference>
<dbReference type="PANTHER" id="PTHR23026">
    <property type="entry name" value="NADPH NITROREDUCTASE"/>
    <property type="match status" value="1"/>
</dbReference>
<dbReference type="Pfam" id="PF00881">
    <property type="entry name" value="Nitroreductase"/>
    <property type="match status" value="1"/>
</dbReference>
<dbReference type="SUPFAM" id="SSF55469">
    <property type="entry name" value="FMN-dependent nitroreductase-like"/>
    <property type="match status" value="1"/>
</dbReference>
<reference key="1">
    <citation type="journal article" date="1997" name="Proc. Natl. Acad. Sci. U.S.A.">
        <title>Sequence of a 189-kb segment of the chromosome of Rhodobacter capsulatus SB1003.</title>
        <authorList>
            <person name="Vlcek C."/>
            <person name="Paces V."/>
            <person name="Maltsev N."/>
            <person name="Paces J."/>
            <person name="Haselkorn R."/>
            <person name="Fonstein M."/>
        </authorList>
    </citation>
    <scope>NUCLEOTIDE SEQUENCE [GENOMIC DNA]</scope>
    <source>
        <strain>ATCC BAA-309 / NBRC 16581 / SB1003</strain>
    </source>
</reference>
<reference key="2">
    <citation type="journal article" date="2010" name="J. Bacteriol.">
        <title>Complete genome sequence of the photosynthetic purple nonsulfur bacterium Rhodobacter capsulatus SB 1003.</title>
        <authorList>
            <person name="Strnad H."/>
            <person name="Lapidus A."/>
            <person name="Paces J."/>
            <person name="Ulbrich P."/>
            <person name="Vlcek C."/>
            <person name="Paces V."/>
            <person name="Haselkorn R."/>
        </authorList>
    </citation>
    <scope>NUCLEOTIDE SEQUENCE [LARGE SCALE GENOMIC DNA]</scope>
    <source>
        <strain>ATCC BAA-309 / NBRC 16581 / SB1003</strain>
    </source>
</reference>
<keyword id="KW-0169">Cobalamin biosynthesis</keyword>
<keyword id="KW-0285">Flavoprotein</keyword>
<keyword id="KW-0288">FMN</keyword>
<keyword id="KW-0520">NAD</keyword>
<keyword id="KW-0521">NADP</keyword>
<keyword id="KW-0547">Nucleotide-binding</keyword>
<keyword id="KW-0560">Oxidoreductase</keyword>
<keyword id="KW-1185">Reference proteome</keyword>
<gene>
    <name type="primary">bluB</name>
    <name type="ordered locus">RCAP_rcc02052</name>
</gene>
<evidence type="ECO:0000250" key="1"/>
<evidence type="ECO:0000305" key="2"/>
<proteinExistence type="inferred from homology"/>
<organism>
    <name type="scientific">Rhodobacter capsulatus (strain ATCC BAA-309 / NBRC 16581 / SB1003)</name>
    <dbReference type="NCBI Taxonomy" id="272942"/>
    <lineage>
        <taxon>Bacteria</taxon>
        <taxon>Pseudomonadati</taxon>
        <taxon>Pseudomonadota</taxon>
        <taxon>Alphaproteobacteria</taxon>
        <taxon>Rhodobacterales</taxon>
        <taxon>Rhodobacter group</taxon>
        <taxon>Rhodobacter</taxon>
    </lineage>
</organism>
<protein>
    <recommendedName>
        <fullName>5,6-dimethylbenzimidazole synthase</fullName>
        <shortName>DMB synthase</shortName>
        <ecNumber>1.13.11.79</ecNumber>
    </recommendedName>
</protein>
<comment type="function">
    <text evidence="1">Involved in the biosynthesis of cobalamin (vitamin B12). Catalyzes the oxidative fragmentation and contraction of the isoalloxazine heterocycle and the cleavage of the ribityl tail of FMNH(2) to form 5,6-dimethylbenzimidazole (DMB) and D-erythrose 4-phosphate (E4P). NAD(P)H is only required initially to reduce FMN and oxygen drives the oxidative fragmentation (By similarity).</text>
</comment>
<comment type="catalytic activity">
    <reaction>
        <text>FMNH2 + O2 = dialurate + 5,6-dimethylbenzimidazole + D-erythrose 4-phosphate + H(+)</text>
        <dbReference type="Rhea" id="RHEA:27345"/>
        <dbReference type="ChEBI" id="CHEBI:15378"/>
        <dbReference type="ChEBI" id="CHEBI:15379"/>
        <dbReference type="ChEBI" id="CHEBI:15890"/>
        <dbReference type="ChEBI" id="CHEBI:16897"/>
        <dbReference type="ChEBI" id="CHEBI:57618"/>
        <dbReference type="ChEBI" id="CHEBI:140629"/>
        <dbReference type="EC" id="1.13.11.79"/>
    </reaction>
</comment>
<comment type="subunit">
    <text evidence="1">Homooctamer.</text>
</comment>
<comment type="similarity">
    <text evidence="2">Belongs to the BluB family.</text>
</comment>
<accession>D5AV14</accession>
<accession>O68092</accession>
<accession>Q52685</accession>
<feature type="chain" id="PRO_0000409928" description="5,6-dimethylbenzimidazole synthase">
    <location>
        <begin position="1"/>
        <end position="207"/>
    </location>
</feature>
<feature type="binding site" evidence="1">
    <location>
        <begin position="18"/>
        <end position="22"/>
    </location>
    <ligand>
        <name>FMN</name>
        <dbReference type="ChEBI" id="CHEBI:58210"/>
    </ligand>
</feature>
<feature type="binding site" evidence="1">
    <location>
        <position position="46"/>
    </location>
    <ligand>
        <name>FMN</name>
        <dbReference type="ChEBI" id="CHEBI:58210"/>
    </ligand>
</feature>
<feature type="binding site" evidence="1">
    <location>
        <position position="95"/>
    </location>
    <ligand>
        <name>FMN</name>
        <dbReference type="ChEBI" id="CHEBI:58210"/>
    </ligand>
</feature>
<feature type="binding site" evidence="1">
    <location>
        <position position="154"/>
    </location>
    <ligand>
        <name>FMN</name>
        <dbReference type="ChEBI" id="CHEBI:58210"/>
    </ligand>
</feature>
<name>BLUB_RHOCB</name>
<sequence length="207" mass="23059">MNFEQTHRDALTEVLRWRRDVRHFRPDPIDEAVIDRLRAVMDMAPSVGNARPWRVIRVDSPALRAEVLANFNAARAAAGSAYAGEQAEAYATLKLQGIDQAPLQLAVFTHRDPAAGHGLGRASMPVTLQQSTAMAIHTLWLAARAENLGLGMVSVLDPKAVERLLNAPPDWDFVAWLCIGVPEFTDDTPLLHRAGWQENLPTEWERR</sequence>